<protein>
    <recommendedName>
        <fullName>Envelope glycoprotein D</fullName>
        <shortName>gD</shortName>
    </recommendedName>
    <alternativeName>
        <fullName>Glycoprotein 17/18</fullName>
    </alternativeName>
</protein>
<evidence type="ECO:0000250" key="1">
    <source>
        <dbReference type="UniProtKB" id="P57083"/>
    </source>
</evidence>
<evidence type="ECO:0000250" key="2">
    <source>
        <dbReference type="UniProtKB" id="Q05059"/>
    </source>
</evidence>
<evidence type="ECO:0000250" key="3">
    <source>
        <dbReference type="UniProtKB" id="Q69091"/>
    </source>
</evidence>
<evidence type="ECO:0000255" key="4"/>
<evidence type="ECO:0000256" key="5">
    <source>
        <dbReference type="SAM" id="MobiDB-lite"/>
    </source>
</evidence>
<evidence type="ECO:0000305" key="6"/>
<feature type="signal peptide" evidence="4">
    <location>
        <begin position="1"/>
        <end position="19"/>
    </location>
</feature>
<feature type="chain" id="PRO_0000038224" description="Envelope glycoprotein D">
    <location>
        <begin position="20"/>
        <end position="442"/>
    </location>
</feature>
<feature type="topological domain" description="Virion surface" evidence="4">
    <location>
        <begin position="20"/>
        <end position="405"/>
    </location>
</feature>
<feature type="transmembrane region" description="Helical" evidence="4">
    <location>
        <begin position="406"/>
        <end position="422"/>
    </location>
</feature>
<feature type="topological domain" description="Intravirion" evidence="4">
    <location>
        <begin position="423"/>
        <end position="442"/>
    </location>
</feature>
<feature type="region of interest" description="Disordered" evidence="5">
    <location>
        <begin position="331"/>
        <end position="364"/>
    </location>
</feature>
<feature type="glycosylation site" description="N-linked (GlcNAc...) asparagine; by host" evidence="4">
    <location>
        <position position="103"/>
    </location>
</feature>
<feature type="glycosylation site" description="N-linked (GlcNAc...) asparagine; by host" evidence="4">
    <location>
        <position position="111"/>
    </location>
</feature>
<feature type="glycosylation site" description="N-linked (GlcNAc...) asparagine; by host" evidence="4">
    <location>
        <position position="347"/>
    </location>
</feature>
<feature type="glycosylation site" description="N-linked (GlcNAc...) asparagine; by host" evidence="4">
    <location>
        <position position="396"/>
    </location>
</feature>
<feature type="disulfide bond" evidence="1">
    <location>
        <begin position="138"/>
        <end position="259"/>
    </location>
</feature>
<feature type="disulfide bond" evidence="1">
    <location>
        <begin position="176"/>
        <end position="273"/>
    </location>
</feature>
<feature type="disulfide bond" evidence="1">
    <location>
        <begin position="188"/>
        <end position="197"/>
    </location>
</feature>
<dbReference type="EMBL" id="M62923">
    <property type="protein sequence ID" value="AAA46081.1"/>
    <property type="molecule type" value="Genomic_DNA"/>
</dbReference>
<dbReference type="EMBL" id="M86931">
    <property type="status" value="NOT_ANNOTATED_CDS"/>
    <property type="molecule type" value="Genomic_DNA"/>
</dbReference>
<dbReference type="EMBL" id="M87497">
    <property type="protein sequence ID" value="AAA46073.1"/>
    <property type="status" value="ALT_INIT"/>
    <property type="molecule type" value="Genomic_DNA"/>
</dbReference>
<dbReference type="PIR" id="A38518">
    <property type="entry name" value="VGBEEA"/>
</dbReference>
<dbReference type="SMR" id="P22484"/>
<dbReference type="GlyCosmos" id="P22484">
    <property type="glycosylation" value="4 sites, No reported glycans"/>
</dbReference>
<dbReference type="GO" id="GO:0016020">
    <property type="term" value="C:membrane"/>
    <property type="evidence" value="ECO:0007669"/>
    <property type="project" value="UniProtKB-KW"/>
</dbReference>
<dbReference type="GO" id="GO:0019031">
    <property type="term" value="C:viral envelope"/>
    <property type="evidence" value="ECO:0007669"/>
    <property type="project" value="UniProtKB-KW"/>
</dbReference>
<dbReference type="GO" id="GO:0055036">
    <property type="term" value="C:virion membrane"/>
    <property type="evidence" value="ECO:0007669"/>
    <property type="project" value="UniProtKB-SubCell"/>
</dbReference>
<dbReference type="GO" id="GO:0098670">
    <property type="term" value="P:entry receptor-mediated virion attachment to host cell"/>
    <property type="evidence" value="ECO:0007669"/>
    <property type="project" value="UniProtKB-KW"/>
</dbReference>
<dbReference type="GO" id="GO:0046718">
    <property type="term" value="P:symbiont entry into host cell"/>
    <property type="evidence" value="ECO:0007669"/>
    <property type="project" value="UniProtKB-KW"/>
</dbReference>
<dbReference type="CDD" id="cd12087">
    <property type="entry name" value="TM_EGFR-like"/>
    <property type="match status" value="1"/>
</dbReference>
<dbReference type="Gene3D" id="2.70.230.10">
    <property type="match status" value="1"/>
</dbReference>
<dbReference type="InterPro" id="IPR002896">
    <property type="entry name" value="Herpes_glycop_dom"/>
</dbReference>
<dbReference type="InterPro" id="IPR036179">
    <property type="entry name" value="Ig-like_dom_sf"/>
</dbReference>
<dbReference type="Pfam" id="PF01537">
    <property type="entry name" value="Herpes_glycop_D"/>
    <property type="match status" value="1"/>
</dbReference>
<dbReference type="SUPFAM" id="SSF48726">
    <property type="entry name" value="Immunoglobulin"/>
    <property type="match status" value="1"/>
</dbReference>
<gene>
    <name type="primary">gD</name>
    <name type="synonym">GP17/18</name>
</gene>
<reference key="1">
    <citation type="journal article" date="1991" name="Virology">
        <title>Sequence analysis of a glycoprotein D gene homolog within the unique short segment of the EHV-1 genome.</title>
        <authorList>
            <person name="Flowers C.C."/>
            <person name="Eastman E.M."/>
            <person name="O'Callaghan D.J."/>
        </authorList>
    </citation>
    <scope>NUCLEOTIDE SEQUENCE [GENOMIC DNA]</scope>
</reference>
<reference key="2">
    <citation type="journal article" date="1992" name="Virology">
        <title>Open reading frames encoding a protein kinase, homolog of glycoprotein gX of pseudorabies virus, and a novel glycoprotein map within the unique short segment of equine herpesvirus type 1.</title>
        <authorList>
            <person name="Colle C.F. III"/>
            <person name="Flowers C.C."/>
            <person name="O'Callaghan D.J."/>
        </authorList>
    </citation>
    <scope>NUCLEOTIDE SEQUENCE [GENOMIC DNA]</scope>
</reference>
<organism>
    <name type="scientific">Equine herpesvirus 1 (strain Kentucky A)</name>
    <name type="common">EHV-1</name>
    <name type="synonym">Equine abortion virus</name>
    <dbReference type="NCBI Taxonomy" id="10329"/>
    <lineage>
        <taxon>Viruses</taxon>
        <taxon>Duplodnaviria</taxon>
        <taxon>Heunggongvirae</taxon>
        <taxon>Peploviricota</taxon>
        <taxon>Herviviricetes</taxon>
        <taxon>Herpesvirales</taxon>
        <taxon>Orthoherpesviridae</taxon>
        <taxon>Alphaherpesvirinae</taxon>
        <taxon>Varicellovirus</taxon>
        <taxon>Varicellovirus equidalpha1</taxon>
        <taxon>Equid alphaherpesvirus 1</taxon>
    </lineage>
</organism>
<keyword id="KW-1015">Disulfide bond</keyword>
<keyword id="KW-0325">Glycoprotein</keyword>
<keyword id="KW-0945">Host-virus interaction</keyword>
<keyword id="KW-0472">Membrane</keyword>
<keyword id="KW-0732">Signal</keyword>
<keyword id="KW-0812">Transmembrane</keyword>
<keyword id="KW-1133">Transmembrane helix</keyword>
<keyword id="KW-1161">Viral attachment to host cell</keyword>
<keyword id="KW-1234">Viral attachment to host entry receptor</keyword>
<keyword id="KW-0261">Viral envelope protein</keyword>
<keyword id="KW-0946">Virion</keyword>
<keyword id="KW-1160">Virus entry into host cell</keyword>
<proteinExistence type="inferred from homology"/>
<comment type="function">
    <text evidence="2">Envelope glycoprotein that binds to host cell entry receptors, promoting the virus entry into host cells. May trigger fusion with host membrane, by recruiting the fusion machinery composed of gB and gH/gL (By similarity).</text>
</comment>
<comment type="subcellular location">
    <subcellularLocation>
        <location evidence="2">Virion membrane</location>
        <topology evidence="2">Single-pass type I membrane protein</topology>
    </subcellularLocation>
    <text evidence="3">During virion morphogenesis, this protein probably accumulates in the endosomes and trans-Golgi where secondary envelopment occurs.</text>
</comment>
<comment type="similarity">
    <text evidence="6">Belongs to the herpesviridae glycoprotein D family.</text>
</comment>
<comment type="sequence caution" evidence="6">
    <conflict type="erroneous initiation">
        <sequence resource="EMBL-CDS" id="AAA46073"/>
    </conflict>
</comment>
<sequence>MPAVLLVLYVNPPPSVCILTQKLSLGLYNQWWRVCRSVPPPWYVFFNKRSMSTFKLMMDGRLVFAMAIAILSVVLSCGTCEKAKRAVRGRQDRPKEFPPPRYNYTILTRYNATALASPFINDQVKNVDLRIVTATRPCEMIALIAKTNIDSILKELAAAQKTYSARLTWFKIMPTCATPIHDVSYMKCNPKLSFAMCDERSDILWQASLITMAAETDDELGLVLAAPAHSASGLYRRVIEIDGRRIYTDFSVTIPSERCPIAFELNFGNPDRCKTPEQYSRGEVFTRRFLGEFNFPQGEHMTWVKFWFVYDGGNLPVQFYEAQAFARPVPPDNHPGFDSVESEITQNKTDPKPGQADPKPNQPFKWPSIKHLVPRLDEVDEVIEPVTKPPKTSKSNSTFVGISVGLGIAGLVLVGVILYVCLRRKKELKVCTERLDSPTLDL</sequence>
<organismHost>
    <name type="scientific">Equus caballus</name>
    <name type="common">Horse</name>
    <dbReference type="NCBI Taxonomy" id="9796"/>
</organismHost>
<accession>P22484</accession>
<name>GD_EHV1K</name>